<proteinExistence type="evidence at protein level"/>
<dbReference type="EMBL" id="AF395331">
    <property type="protein sequence ID" value="AAK77868.1"/>
    <property type="molecule type" value="mRNA"/>
</dbReference>
<dbReference type="EMBL" id="AE013599">
    <property type="protein sequence ID" value="AAF46829.1"/>
    <property type="molecule type" value="Genomic_DNA"/>
</dbReference>
<dbReference type="EMBL" id="AE013599">
    <property type="protein sequence ID" value="AAF46830.1"/>
    <property type="molecule type" value="Genomic_DNA"/>
</dbReference>
<dbReference type="EMBL" id="AE013599">
    <property type="protein sequence ID" value="AAM68219.1"/>
    <property type="molecule type" value="Genomic_DNA"/>
</dbReference>
<dbReference type="EMBL" id="AE013599">
    <property type="protein sequence ID" value="AAM68220.1"/>
    <property type="molecule type" value="Genomic_DNA"/>
</dbReference>
<dbReference type="EMBL" id="AE013599">
    <property type="protein sequence ID" value="AHN56507.1"/>
    <property type="molecule type" value="Genomic_DNA"/>
</dbReference>
<dbReference type="EMBL" id="AY058270">
    <property type="protein sequence ID" value="AAL13499.1"/>
    <property type="status" value="ALT_INIT"/>
    <property type="molecule type" value="mRNA"/>
</dbReference>
<dbReference type="EMBL" id="BT001693">
    <property type="protein sequence ID" value="AAN71448.1"/>
    <property type="molecule type" value="mRNA"/>
</dbReference>
<dbReference type="EMBL" id="BT125698">
    <property type="protein sequence ID" value="ADO16264.1"/>
    <property type="molecule type" value="mRNA"/>
</dbReference>
<dbReference type="EMBL" id="BT150349">
    <property type="protein sequence ID" value="AGW52158.1"/>
    <property type="molecule type" value="mRNA"/>
</dbReference>
<dbReference type="RefSeq" id="NP_001286712.1">
    <property type="nucleotide sequence ID" value="NM_001299783.1"/>
</dbReference>
<dbReference type="RefSeq" id="NP_611661.1">
    <property type="nucleotide sequence ID" value="NM_137817.3"/>
</dbReference>
<dbReference type="RefSeq" id="NP_726187.1">
    <property type="nucleotide sequence ID" value="NM_166524.2"/>
</dbReference>
<dbReference type="RefSeq" id="NP_726188.1">
    <property type="nucleotide sequence ID" value="NM_166525.2"/>
</dbReference>
<dbReference type="RefSeq" id="NP_726189.1">
    <property type="nucleotide sequence ID" value="NM_166526.2"/>
</dbReference>
<dbReference type="SMR" id="Q9W266"/>
<dbReference type="FunCoup" id="Q9W266">
    <property type="interactions" value="179"/>
</dbReference>
<dbReference type="IntAct" id="Q9W266">
    <property type="interactions" value="1"/>
</dbReference>
<dbReference type="STRING" id="7227.FBpp0071760"/>
<dbReference type="GlyCosmos" id="Q9W266">
    <property type="glycosylation" value="4 sites, No reported glycans"/>
</dbReference>
<dbReference type="GlyGen" id="Q9W266">
    <property type="glycosylation" value="6 sites"/>
</dbReference>
<dbReference type="SwissPalm" id="Q9W266"/>
<dbReference type="PaxDb" id="7227-FBpp0071760"/>
<dbReference type="EnsemblMetazoa" id="FBtr0071849">
    <property type="protein sequence ID" value="FBpp0071760"/>
    <property type="gene ID" value="FBgn0034718"/>
</dbReference>
<dbReference type="EnsemblMetazoa" id="FBtr0071850">
    <property type="protein sequence ID" value="FBpp0071761"/>
    <property type="gene ID" value="FBgn0034718"/>
</dbReference>
<dbReference type="EnsemblMetazoa" id="FBtr0071851">
    <property type="protein sequence ID" value="FBpp0071762"/>
    <property type="gene ID" value="FBgn0034718"/>
</dbReference>
<dbReference type="EnsemblMetazoa" id="FBtr0071852">
    <property type="protein sequence ID" value="FBpp0071763"/>
    <property type="gene ID" value="FBgn0034718"/>
</dbReference>
<dbReference type="EnsemblMetazoa" id="FBtr0342984">
    <property type="protein sequence ID" value="FBpp0309748"/>
    <property type="gene ID" value="FBgn0034718"/>
</dbReference>
<dbReference type="GeneID" id="37548"/>
<dbReference type="KEGG" id="dme:Dmel_CG3413"/>
<dbReference type="UCSC" id="CG3413-RA">
    <property type="organism name" value="d. melanogaster"/>
</dbReference>
<dbReference type="UCSC" id="CG3413-RB">
    <property type="organism name" value="d. melanogaster"/>
</dbReference>
<dbReference type="AGR" id="FB:FBgn0034718"/>
<dbReference type="CTD" id="37548"/>
<dbReference type="FlyBase" id="FBgn0034718">
    <property type="gene designation" value="wdp"/>
</dbReference>
<dbReference type="VEuPathDB" id="VectorBase:FBgn0034718"/>
<dbReference type="eggNOG" id="KOG0619">
    <property type="taxonomic scope" value="Eukaryota"/>
</dbReference>
<dbReference type="HOGENOM" id="CLU_024471_0_0_1"/>
<dbReference type="InParanoid" id="Q9W266"/>
<dbReference type="OMA" id="TDCPADC"/>
<dbReference type="OrthoDB" id="1741314at2759"/>
<dbReference type="PhylomeDB" id="Q9W266"/>
<dbReference type="Reactome" id="R-DME-388844">
    <property type="pathway name" value="Receptor-type tyrosine-protein phosphatases"/>
</dbReference>
<dbReference type="SignaLink" id="Q9W266"/>
<dbReference type="BioGRID-ORCS" id="37548">
    <property type="hits" value="0 hits in 1 CRISPR screen"/>
</dbReference>
<dbReference type="GenomeRNAi" id="37548"/>
<dbReference type="PRO" id="PR:Q9W266"/>
<dbReference type="Proteomes" id="UP000000803">
    <property type="component" value="Chromosome 2R"/>
</dbReference>
<dbReference type="Bgee" id="FBgn0034718">
    <property type="expression patterns" value="Expressed in cortex associated CNS glial cell (Drosophila) in post-embryonic organism and 161 other cell types or tissues"/>
</dbReference>
<dbReference type="GO" id="GO:0016020">
    <property type="term" value="C:membrane"/>
    <property type="evidence" value="ECO:0000255"/>
    <property type="project" value="FlyBase"/>
</dbReference>
<dbReference type="GO" id="GO:0005886">
    <property type="term" value="C:plasma membrane"/>
    <property type="evidence" value="ECO:0000314"/>
    <property type="project" value="UniProtKB"/>
</dbReference>
<dbReference type="GO" id="GO:0046426">
    <property type="term" value="P:negative regulation of receptor signaling pathway via JAK-STAT"/>
    <property type="evidence" value="ECO:0000315"/>
    <property type="project" value="UniProtKB"/>
</dbReference>
<dbReference type="GO" id="GO:2000647">
    <property type="term" value="P:negative regulation of stem cell proliferation"/>
    <property type="evidence" value="ECO:0000315"/>
    <property type="project" value="UniProtKB"/>
</dbReference>
<dbReference type="GO" id="GO:0045807">
    <property type="term" value="P:positive regulation of endocytosis"/>
    <property type="evidence" value="ECO:0000315"/>
    <property type="project" value="UniProtKB"/>
</dbReference>
<dbReference type="GO" id="GO:0008039">
    <property type="term" value="P:synaptic target recognition"/>
    <property type="evidence" value="ECO:0000315"/>
    <property type="project" value="FlyBase"/>
</dbReference>
<dbReference type="GO" id="GO:0001894">
    <property type="term" value="P:tissue homeostasis"/>
    <property type="evidence" value="ECO:0000315"/>
    <property type="project" value="UniProtKB"/>
</dbReference>
<dbReference type="GO" id="GO:0060438">
    <property type="term" value="P:trachea development"/>
    <property type="evidence" value="ECO:0000270"/>
    <property type="project" value="FlyBase"/>
</dbReference>
<dbReference type="FunFam" id="3.80.10.10:FF:001425">
    <property type="entry name" value="Protein windpipe"/>
    <property type="match status" value="1"/>
</dbReference>
<dbReference type="Gene3D" id="3.80.10.10">
    <property type="entry name" value="Ribonuclease Inhibitor"/>
    <property type="match status" value="1"/>
</dbReference>
<dbReference type="InterPro" id="IPR001611">
    <property type="entry name" value="Leu-rich_rpt"/>
</dbReference>
<dbReference type="InterPro" id="IPR032675">
    <property type="entry name" value="LRR_dom_sf"/>
</dbReference>
<dbReference type="PANTHER" id="PTHR24366">
    <property type="entry name" value="IG(IMMUNOGLOBULIN) AND LRR(LEUCINE RICH REPEAT) DOMAINS"/>
    <property type="match status" value="1"/>
</dbReference>
<dbReference type="PANTHER" id="PTHR24366:SF96">
    <property type="entry name" value="LEUCINE RICH REPEAT CONTAINING 53"/>
    <property type="match status" value="1"/>
</dbReference>
<dbReference type="SUPFAM" id="SSF52058">
    <property type="entry name" value="L domain-like"/>
    <property type="match status" value="1"/>
</dbReference>
<dbReference type="PROSITE" id="PS51450">
    <property type="entry name" value="LRR"/>
    <property type="match status" value="4"/>
</dbReference>
<accession>Q9W266</accession>
<accession>E1NZE9</accession>
<accession>Q8IGN2</accession>
<accession>Q95U72</accession>
<comment type="function">
    <text evidence="5">Plays a role in negative regulation of the JAK/STAT pathway by binding to the receptor dome and promoting its internalization for subsequent lysosomal degradation, thereby reducing JAK/STAT signaling.</text>
</comment>
<comment type="subunit">
    <text evidence="5">Interacts with dome; the interaction promotes internalization of dome and its subsequent lysosomal degradation.</text>
</comment>
<comment type="subcellular location">
    <subcellularLocation>
        <location evidence="5">Cell membrane</location>
        <topology evidence="7">Single-pass type I membrane protein</topology>
    </subcellularLocation>
</comment>
<comment type="tissue specificity">
    <text evidence="4 5">In adult intestine, expressed in both small progenitor cells and large nuclei enterocytes (at protein level) (PubMed:25923769). During embryogenesis, restricted to the developing trachea (PubMed:11804792).</text>
</comment>
<comment type="developmental stage">
    <text evidence="4">Detected in embryo, third instar larva and adult.</text>
</comment>
<comment type="disruption phenotype">
    <text evidence="5">Homozygotes are semi-lethal with a few escapers displaying no visual phenotype but showing disruption of midgut homeostasis under normal conditions and enhanced tissue damage-induced midgut regeneration.</text>
</comment>
<comment type="sequence caution" evidence="7">
    <conflict type="erroneous initiation">
        <sequence resource="EMBL-CDS" id="AAL13499"/>
    </conflict>
    <text>Truncated N-terminus.</text>
</comment>
<reference evidence="8" key="1">
    <citation type="journal article" date="2002" name="Mech. Dev.">
        <title>Drosophila windpipe codes for a leucine-rich repeat protein expressed in the developing trachea.</title>
        <authorList>
            <person name="Huff J.L."/>
            <person name="Kingsley K.L."/>
            <person name="Miller J.M."/>
            <person name="Hoshizaki D.K."/>
        </authorList>
    </citation>
    <scope>NUCLEOTIDE SEQUENCE [MRNA]</scope>
    <scope>TISSUE SPECIFICITY</scope>
    <scope>DEVELOPMENTAL STAGE</scope>
</reference>
<reference evidence="14" key="2">
    <citation type="journal article" date="2000" name="Science">
        <title>The genome sequence of Drosophila melanogaster.</title>
        <authorList>
            <person name="Adams M.D."/>
            <person name="Celniker S.E."/>
            <person name="Holt R.A."/>
            <person name="Evans C.A."/>
            <person name="Gocayne J.D."/>
            <person name="Amanatides P.G."/>
            <person name="Scherer S.E."/>
            <person name="Li P.W."/>
            <person name="Hoskins R.A."/>
            <person name="Galle R.F."/>
            <person name="George R.A."/>
            <person name="Lewis S.E."/>
            <person name="Richards S."/>
            <person name="Ashburner M."/>
            <person name="Henderson S.N."/>
            <person name="Sutton G.G."/>
            <person name="Wortman J.R."/>
            <person name="Yandell M.D."/>
            <person name="Zhang Q."/>
            <person name="Chen L.X."/>
            <person name="Brandon R.C."/>
            <person name="Rogers Y.-H.C."/>
            <person name="Blazej R.G."/>
            <person name="Champe M."/>
            <person name="Pfeiffer B.D."/>
            <person name="Wan K.H."/>
            <person name="Doyle C."/>
            <person name="Baxter E.G."/>
            <person name="Helt G."/>
            <person name="Nelson C.R."/>
            <person name="Miklos G.L.G."/>
            <person name="Abril J.F."/>
            <person name="Agbayani A."/>
            <person name="An H.-J."/>
            <person name="Andrews-Pfannkoch C."/>
            <person name="Baldwin D."/>
            <person name="Ballew R.M."/>
            <person name="Basu A."/>
            <person name="Baxendale J."/>
            <person name="Bayraktaroglu L."/>
            <person name="Beasley E.M."/>
            <person name="Beeson K.Y."/>
            <person name="Benos P.V."/>
            <person name="Berman B.P."/>
            <person name="Bhandari D."/>
            <person name="Bolshakov S."/>
            <person name="Borkova D."/>
            <person name="Botchan M.R."/>
            <person name="Bouck J."/>
            <person name="Brokstein P."/>
            <person name="Brottier P."/>
            <person name="Burtis K.C."/>
            <person name="Busam D.A."/>
            <person name="Butler H."/>
            <person name="Cadieu E."/>
            <person name="Center A."/>
            <person name="Chandra I."/>
            <person name="Cherry J.M."/>
            <person name="Cawley S."/>
            <person name="Dahlke C."/>
            <person name="Davenport L.B."/>
            <person name="Davies P."/>
            <person name="de Pablos B."/>
            <person name="Delcher A."/>
            <person name="Deng Z."/>
            <person name="Mays A.D."/>
            <person name="Dew I."/>
            <person name="Dietz S.M."/>
            <person name="Dodson K."/>
            <person name="Doup L.E."/>
            <person name="Downes M."/>
            <person name="Dugan-Rocha S."/>
            <person name="Dunkov B.C."/>
            <person name="Dunn P."/>
            <person name="Durbin K.J."/>
            <person name="Evangelista C.C."/>
            <person name="Ferraz C."/>
            <person name="Ferriera S."/>
            <person name="Fleischmann W."/>
            <person name="Fosler C."/>
            <person name="Gabrielian A.E."/>
            <person name="Garg N.S."/>
            <person name="Gelbart W.M."/>
            <person name="Glasser K."/>
            <person name="Glodek A."/>
            <person name="Gong F."/>
            <person name="Gorrell J.H."/>
            <person name="Gu Z."/>
            <person name="Guan P."/>
            <person name="Harris M."/>
            <person name="Harris N.L."/>
            <person name="Harvey D.A."/>
            <person name="Heiman T.J."/>
            <person name="Hernandez J.R."/>
            <person name="Houck J."/>
            <person name="Hostin D."/>
            <person name="Houston K.A."/>
            <person name="Howland T.J."/>
            <person name="Wei M.-H."/>
            <person name="Ibegwam C."/>
            <person name="Jalali M."/>
            <person name="Kalush F."/>
            <person name="Karpen G.H."/>
            <person name="Ke Z."/>
            <person name="Kennison J.A."/>
            <person name="Ketchum K.A."/>
            <person name="Kimmel B.E."/>
            <person name="Kodira C.D."/>
            <person name="Kraft C.L."/>
            <person name="Kravitz S."/>
            <person name="Kulp D."/>
            <person name="Lai Z."/>
            <person name="Lasko P."/>
            <person name="Lei Y."/>
            <person name="Levitsky A.A."/>
            <person name="Li J.H."/>
            <person name="Li Z."/>
            <person name="Liang Y."/>
            <person name="Lin X."/>
            <person name="Liu X."/>
            <person name="Mattei B."/>
            <person name="McIntosh T.C."/>
            <person name="McLeod M.P."/>
            <person name="McPherson D."/>
            <person name="Merkulov G."/>
            <person name="Milshina N.V."/>
            <person name="Mobarry C."/>
            <person name="Morris J."/>
            <person name="Moshrefi A."/>
            <person name="Mount S.M."/>
            <person name="Moy M."/>
            <person name="Murphy B."/>
            <person name="Murphy L."/>
            <person name="Muzny D.M."/>
            <person name="Nelson D.L."/>
            <person name="Nelson D.R."/>
            <person name="Nelson K.A."/>
            <person name="Nixon K."/>
            <person name="Nusskern D.R."/>
            <person name="Pacleb J.M."/>
            <person name="Palazzolo M."/>
            <person name="Pittman G.S."/>
            <person name="Pan S."/>
            <person name="Pollard J."/>
            <person name="Puri V."/>
            <person name="Reese M.G."/>
            <person name="Reinert K."/>
            <person name="Remington K."/>
            <person name="Saunders R.D.C."/>
            <person name="Scheeler F."/>
            <person name="Shen H."/>
            <person name="Shue B.C."/>
            <person name="Siden-Kiamos I."/>
            <person name="Simpson M."/>
            <person name="Skupski M.P."/>
            <person name="Smith T.J."/>
            <person name="Spier E."/>
            <person name="Spradling A.C."/>
            <person name="Stapleton M."/>
            <person name="Strong R."/>
            <person name="Sun E."/>
            <person name="Svirskas R."/>
            <person name="Tector C."/>
            <person name="Turner R."/>
            <person name="Venter E."/>
            <person name="Wang A.H."/>
            <person name="Wang X."/>
            <person name="Wang Z.-Y."/>
            <person name="Wassarman D.A."/>
            <person name="Weinstock G.M."/>
            <person name="Weissenbach J."/>
            <person name="Williams S.M."/>
            <person name="Woodage T."/>
            <person name="Worley K.C."/>
            <person name="Wu D."/>
            <person name="Yang S."/>
            <person name="Yao Q.A."/>
            <person name="Ye J."/>
            <person name="Yeh R.-F."/>
            <person name="Zaveri J.S."/>
            <person name="Zhan M."/>
            <person name="Zhang G."/>
            <person name="Zhao Q."/>
            <person name="Zheng L."/>
            <person name="Zheng X.H."/>
            <person name="Zhong F.N."/>
            <person name="Zhong W."/>
            <person name="Zhou X."/>
            <person name="Zhu S.C."/>
            <person name="Zhu X."/>
            <person name="Smith H.O."/>
            <person name="Gibbs R.A."/>
            <person name="Myers E.W."/>
            <person name="Rubin G.M."/>
            <person name="Venter J.C."/>
        </authorList>
    </citation>
    <scope>NUCLEOTIDE SEQUENCE [LARGE SCALE GENOMIC DNA]</scope>
    <source>
        <strain evidence="14">Berkeley</strain>
    </source>
</reference>
<reference evidence="14" key="3">
    <citation type="journal article" date="2002" name="Genome Biol.">
        <title>Annotation of the Drosophila melanogaster euchromatic genome: a systematic review.</title>
        <authorList>
            <person name="Misra S."/>
            <person name="Crosby M.A."/>
            <person name="Mungall C.J."/>
            <person name="Matthews B.B."/>
            <person name="Campbell K.S."/>
            <person name="Hradecky P."/>
            <person name="Huang Y."/>
            <person name="Kaminker J.S."/>
            <person name="Millburn G.H."/>
            <person name="Prochnik S.E."/>
            <person name="Smith C.D."/>
            <person name="Tupy J.L."/>
            <person name="Whitfield E.J."/>
            <person name="Bayraktaroglu L."/>
            <person name="Berman B.P."/>
            <person name="Bettencourt B.R."/>
            <person name="Celniker S.E."/>
            <person name="de Grey A.D.N.J."/>
            <person name="Drysdale R.A."/>
            <person name="Harris N.L."/>
            <person name="Richter J."/>
            <person name="Russo S."/>
            <person name="Schroeder A.J."/>
            <person name="Shu S.Q."/>
            <person name="Stapleton M."/>
            <person name="Yamada C."/>
            <person name="Ashburner M."/>
            <person name="Gelbart W.M."/>
            <person name="Rubin G.M."/>
            <person name="Lewis S.E."/>
        </authorList>
    </citation>
    <scope>GENOME REANNOTATION</scope>
    <source>
        <strain evidence="14">Berkeley</strain>
    </source>
</reference>
<reference evidence="9 10" key="4">
    <citation type="journal article" date="2002" name="Genome Biol.">
        <title>A Drosophila full-length cDNA resource.</title>
        <authorList>
            <person name="Stapleton M."/>
            <person name="Carlson J.W."/>
            <person name="Brokstein P."/>
            <person name="Yu C."/>
            <person name="Champe M."/>
            <person name="George R.A."/>
            <person name="Guarin H."/>
            <person name="Kronmiller B."/>
            <person name="Pacleb J.M."/>
            <person name="Park S."/>
            <person name="Wan K.H."/>
            <person name="Rubin G.M."/>
            <person name="Celniker S.E."/>
        </authorList>
    </citation>
    <scope>NUCLEOTIDE SEQUENCE [LARGE SCALE MRNA]</scope>
    <source>
        <strain evidence="9 10">Berkeley</strain>
        <tissue evidence="10">Embryo</tissue>
        <tissue evidence="9">Head</tissue>
    </source>
</reference>
<reference evidence="11 12" key="5">
    <citation type="submission" date="2013-09" db="EMBL/GenBank/DDBJ databases">
        <authorList>
            <person name="Carlson J."/>
            <person name="Booth B."/>
            <person name="Frise E."/>
            <person name="Park S."/>
            <person name="Wan K."/>
            <person name="Yu C."/>
            <person name="Celniker S."/>
        </authorList>
    </citation>
    <scope>NUCLEOTIDE SEQUENCE [LARGE SCALE MRNA]</scope>
    <source>
        <strain evidence="11 12">Berkeley</strain>
    </source>
</reference>
<reference evidence="7" key="6">
    <citation type="journal article" date="2015" name="PLoS Genet.">
        <title>Windpipe controls Drosophila intestinal homeostasis by regulating JAK/STAT pathway via promoting receptor endocytosis and lysosomal degradation.</title>
        <authorList>
            <person name="Ren W."/>
            <person name="Zhang Y."/>
            <person name="Li M."/>
            <person name="Wu L."/>
            <person name="Wang G."/>
            <person name="Baeg G.H."/>
            <person name="You J."/>
            <person name="Li Z."/>
            <person name="Lin X."/>
        </authorList>
    </citation>
    <scope>FUNCTION</scope>
    <scope>INTERACTION WITH DOME</scope>
    <scope>SUBCELLULAR LOCATION</scope>
    <scope>TISSUE SPECIFICITY</scope>
    <scope>DISRUPTION PHENOTYPE</scope>
</reference>
<gene>
    <name evidence="13" type="primary">wdp</name>
    <name evidence="13" type="ORF">CG3413</name>
</gene>
<feature type="signal peptide" evidence="1">
    <location>
        <begin position="1"/>
        <end position="20"/>
    </location>
</feature>
<feature type="chain" id="PRO_0000434607" description="Protein windpipe" evidence="1">
    <location>
        <begin position="21"/>
        <end position="677"/>
    </location>
</feature>
<feature type="topological domain" description="Extracellular" evidence="7">
    <location>
        <begin position="21"/>
        <end position="451"/>
    </location>
</feature>
<feature type="transmembrane region" description="Helical" evidence="1">
    <location>
        <begin position="452"/>
        <end position="472"/>
    </location>
</feature>
<feature type="topological domain" description="Cytoplasmic" evidence="7">
    <location>
        <begin position="473"/>
        <end position="677"/>
    </location>
</feature>
<feature type="repeat" description="LRR 1" evidence="1">
    <location>
        <begin position="91"/>
        <end position="116"/>
    </location>
</feature>
<feature type="repeat" description="LRR 2" evidence="1">
    <location>
        <begin position="118"/>
        <end position="133"/>
    </location>
</feature>
<feature type="repeat" description="LRR 3" evidence="1">
    <location>
        <begin position="134"/>
        <end position="156"/>
    </location>
</feature>
<feature type="repeat" description="LRR 4" evidence="1">
    <location>
        <begin position="158"/>
        <end position="183"/>
    </location>
</feature>
<feature type="domain" description="LRRCT" evidence="1">
    <location>
        <begin position="184"/>
        <end position="216"/>
    </location>
</feature>
<feature type="region of interest" description="Disordered" evidence="3">
    <location>
        <begin position="264"/>
        <end position="285"/>
    </location>
</feature>
<feature type="region of interest" description="Disordered" evidence="3">
    <location>
        <begin position="298"/>
        <end position="317"/>
    </location>
</feature>
<feature type="region of interest" description="Disordered" evidence="3">
    <location>
        <begin position="325"/>
        <end position="385"/>
    </location>
</feature>
<feature type="region of interest" description="Disordered" evidence="3">
    <location>
        <begin position="502"/>
        <end position="523"/>
    </location>
</feature>
<feature type="region of interest" description="Disordered" evidence="3">
    <location>
        <begin position="539"/>
        <end position="677"/>
    </location>
</feature>
<feature type="compositionally biased region" description="Basic and acidic residues" evidence="3">
    <location>
        <begin position="347"/>
        <end position="372"/>
    </location>
</feature>
<feature type="compositionally biased region" description="Polar residues" evidence="3">
    <location>
        <begin position="374"/>
        <end position="385"/>
    </location>
</feature>
<feature type="compositionally biased region" description="Low complexity" evidence="3">
    <location>
        <begin position="595"/>
        <end position="607"/>
    </location>
</feature>
<feature type="glycosylation site" description="N-linked (GlcNAc...) asparagine" evidence="2">
    <location>
        <position position="53"/>
    </location>
</feature>
<feature type="glycosylation site" description="N-linked (GlcNAc...) asparagine" evidence="2">
    <location>
        <position position="80"/>
    </location>
</feature>
<feature type="glycosylation site" description="N-linked (GlcNAc...) asparagine" evidence="2">
    <location>
        <position position="145"/>
    </location>
</feature>
<feature type="glycosylation site" description="N-linked (GlcNAc...) asparagine" evidence="2">
    <location>
        <position position="170"/>
    </location>
</feature>
<feature type="sequence conflict" description="In Ref. 4; AAN71448." evidence="7" ref="4">
    <original>R</original>
    <variation>Q</variation>
    <location>
        <position position="490"/>
    </location>
</feature>
<feature type="sequence conflict" description="In Ref. 4; AAN71448." evidence="7" ref="4">
    <original>S</original>
    <variation>T</variation>
    <location>
        <position position="518"/>
    </location>
</feature>
<sequence>MERVHLTAWLALFLIVVANATPTPARTPTGCPADCTCSLSQHTHKPLYHLKCNSTRGLRLTEKTFQSTVPVHSIDLSHLNLTRLSHLLDKLPELTSADLSHNQLKDLGHLGKGLKRLNLKHNQLTSDKLRKLPQHLQVLNLQHNNITHLPLELTHMHQLHQLELSHNAINCSCQTLEVRNWLVERIVYMEHPVVCSYPLEFRGRSWLQLKQDEICKKEKYQWFDTEENELMMGDQPAAVSAEREDEEELGKDFLPIVGNPAATAKKVRSPQIPLPSDQVEGSGDLSETNMELKLPEETVAEPEAAESQLVDAAASPSVLEEHIVKDEDEDDEGSGSGGGLLIIPDPSKVKITSEDDIDSDGKPEESDVRPLENPENSENPDTVFSNKIGIYEGDQEEKKPVEEDNIVPVVMTNLDTGLESDVVTDGPLDSSKESEDILTAKIGKPKDDSSAIYYLLAVIGLIVVGLVLFVAIKRCKYDSNAAARDAEAQRQTELLDMDKKQLGKPLHKNGHGNGQEHSPLIGEKTKLDEAQIVKKPYENGEAKDGAGQQPLLNGNGSANGGTKEAPETGEPAAHEYYPITPRYPTPQSPRASKYAQQQQLAEQNNNEPDGAYLPSSPKSGRYSPVYSPETGRVKIKLTETPKPKTPMLVTRSKSNAGDIITTPVRPIEPTHQVINGH</sequence>
<keyword id="KW-1003">Cell membrane</keyword>
<keyword id="KW-0325">Glycoprotein</keyword>
<keyword id="KW-0433">Leucine-rich repeat</keyword>
<keyword id="KW-0472">Membrane</keyword>
<keyword id="KW-1185">Reference proteome</keyword>
<keyword id="KW-0677">Repeat</keyword>
<keyword id="KW-0732">Signal</keyword>
<keyword id="KW-0812">Transmembrane</keyword>
<keyword id="KW-1133">Transmembrane helix</keyword>
<evidence type="ECO:0000255" key="1"/>
<evidence type="ECO:0000255" key="2">
    <source>
        <dbReference type="PROSITE-ProRule" id="PRU00498"/>
    </source>
</evidence>
<evidence type="ECO:0000256" key="3">
    <source>
        <dbReference type="SAM" id="MobiDB-lite"/>
    </source>
</evidence>
<evidence type="ECO:0000269" key="4">
    <source>
    </source>
</evidence>
<evidence type="ECO:0000269" key="5">
    <source>
    </source>
</evidence>
<evidence type="ECO:0000303" key="6">
    <source>
    </source>
</evidence>
<evidence type="ECO:0000305" key="7"/>
<evidence type="ECO:0000312" key="8">
    <source>
        <dbReference type="EMBL" id="AAK77868.1"/>
    </source>
</evidence>
<evidence type="ECO:0000312" key="9">
    <source>
        <dbReference type="EMBL" id="AAL13499.1"/>
    </source>
</evidence>
<evidence type="ECO:0000312" key="10">
    <source>
        <dbReference type="EMBL" id="AAN71448.1"/>
    </source>
</evidence>
<evidence type="ECO:0000312" key="11">
    <source>
        <dbReference type="EMBL" id="ADO16264.1"/>
    </source>
</evidence>
<evidence type="ECO:0000312" key="12">
    <source>
        <dbReference type="EMBL" id="AGW52158.1"/>
    </source>
</evidence>
<evidence type="ECO:0000312" key="13">
    <source>
        <dbReference type="FlyBase" id="FBgn0034718"/>
    </source>
</evidence>
<evidence type="ECO:0000312" key="14">
    <source>
        <dbReference type="Proteomes" id="UP000000803"/>
    </source>
</evidence>
<organism evidence="8">
    <name type="scientific">Drosophila melanogaster</name>
    <name type="common">Fruit fly</name>
    <dbReference type="NCBI Taxonomy" id="7227"/>
    <lineage>
        <taxon>Eukaryota</taxon>
        <taxon>Metazoa</taxon>
        <taxon>Ecdysozoa</taxon>
        <taxon>Arthropoda</taxon>
        <taxon>Hexapoda</taxon>
        <taxon>Insecta</taxon>
        <taxon>Pterygota</taxon>
        <taxon>Neoptera</taxon>
        <taxon>Endopterygota</taxon>
        <taxon>Diptera</taxon>
        <taxon>Brachycera</taxon>
        <taxon>Muscomorpha</taxon>
        <taxon>Ephydroidea</taxon>
        <taxon>Drosophilidae</taxon>
        <taxon>Drosophila</taxon>
        <taxon>Sophophora</taxon>
    </lineage>
</organism>
<protein>
    <recommendedName>
        <fullName evidence="6">Protein windpipe</fullName>
    </recommendedName>
</protein>
<name>WDP_DROME</name>